<keyword id="KW-0414">Isoprene biosynthesis</keyword>
<keyword id="KW-0456">Lyase</keyword>
<keyword id="KW-0479">Metal-binding</keyword>
<organism>
    <name type="scientific">Edwardsiella ictaluri (strain 93-146)</name>
    <dbReference type="NCBI Taxonomy" id="634503"/>
    <lineage>
        <taxon>Bacteria</taxon>
        <taxon>Pseudomonadati</taxon>
        <taxon>Pseudomonadota</taxon>
        <taxon>Gammaproteobacteria</taxon>
        <taxon>Enterobacterales</taxon>
        <taxon>Hafniaceae</taxon>
        <taxon>Edwardsiella</taxon>
    </lineage>
</organism>
<name>ISPF_EDWI9</name>
<reference key="1">
    <citation type="submission" date="2009-03" db="EMBL/GenBank/DDBJ databases">
        <title>Complete genome sequence of Edwardsiella ictaluri 93-146.</title>
        <authorList>
            <person name="Williams M.L."/>
            <person name="Gillaspy A.F."/>
            <person name="Dyer D.W."/>
            <person name="Thune R.L."/>
            <person name="Waldbieser G.C."/>
            <person name="Schuster S.C."/>
            <person name="Gipson J."/>
            <person name="Zaitshik J."/>
            <person name="Landry C."/>
            <person name="Lawrence M.L."/>
        </authorList>
    </citation>
    <scope>NUCLEOTIDE SEQUENCE [LARGE SCALE GENOMIC DNA]</scope>
    <source>
        <strain>93-146</strain>
    </source>
</reference>
<dbReference type="EC" id="4.6.1.12" evidence="1"/>
<dbReference type="EMBL" id="CP001600">
    <property type="protein sequence ID" value="ACR70396.1"/>
    <property type="molecule type" value="Genomic_DNA"/>
</dbReference>
<dbReference type="RefSeq" id="WP_015872478.1">
    <property type="nucleotide sequence ID" value="NZ_CP169062.1"/>
</dbReference>
<dbReference type="SMR" id="C5BGJ0"/>
<dbReference type="STRING" id="67780.B6E78_07905"/>
<dbReference type="GeneID" id="69540119"/>
<dbReference type="KEGG" id="eic:NT01EI_3255"/>
<dbReference type="PATRIC" id="fig|634503.3.peg.2901"/>
<dbReference type="HOGENOM" id="CLU_084630_2_0_6"/>
<dbReference type="OrthoDB" id="9804336at2"/>
<dbReference type="UniPathway" id="UPA00056">
    <property type="reaction ID" value="UER00095"/>
</dbReference>
<dbReference type="Proteomes" id="UP000001485">
    <property type="component" value="Chromosome"/>
</dbReference>
<dbReference type="GO" id="GO:0008685">
    <property type="term" value="F:2-C-methyl-D-erythritol 2,4-cyclodiphosphate synthase activity"/>
    <property type="evidence" value="ECO:0007669"/>
    <property type="project" value="UniProtKB-UniRule"/>
</dbReference>
<dbReference type="GO" id="GO:0046872">
    <property type="term" value="F:metal ion binding"/>
    <property type="evidence" value="ECO:0007669"/>
    <property type="project" value="UniProtKB-KW"/>
</dbReference>
<dbReference type="GO" id="GO:0019288">
    <property type="term" value="P:isopentenyl diphosphate biosynthetic process, methylerythritol 4-phosphate pathway"/>
    <property type="evidence" value="ECO:0007669"/>
    <property type="project" value="UniProtKB-UniRule"/>
</dbReference>
<dbReference type="GO" id="GO:0016114">
    <property type="term" value="P:terpenoid biosynthetic process"/>
    <property type="evidence" value="ECO:0007669"/>
    <property type="project" value="InterPro"/>
</dbReference>
<dbReference type="CDD" id="cd00554">
    <property type="entry name" value="MECDP_synthase"/>
    <property type="match status" value="1"/>
</dbReference>
<dbReference type="FunFam" id="3.30.1330.50:FF:000001">
    <property type="entry name" value="2-C-methyl-D-erythritol 2,4-cyclodiphosphate synthase"/>
    <property type="match status" value="1"/>
</dbReference>
<dbReference type="Gene3D" id="3.30.1330.50">
    <property type="entry name" value="2-C-methyl-D-erythritol 2,4-cyclodiphosphate synthase"/>
    <property type="match status" value="1"/>
</dbReference>
<dbReference type="HAMAP" id="MF_00107">
    <property type="entry name" value="IspF"/>
    <property type="match status" value="1"/>
</dbReference>
<dbReference type="InterPro" id="IPR003526">
    <property type="entry name" value="MECDP_synthase"/>
</dbReference>
<dbReference type="InterPro" id="IPR020555">
    <property type="entry name" value="MECDP_synthase_CS"/>
</dbReference>
<dbReference type="InterPro" id="IPR036571">
    <property type="entry name" value="MECDP_synthase_sf"/>
</dbReference>
<dbReference type="NCBIfam" id="TIGR00151">
    <property type="entry name" value="ispF"/>
    <property type="match status" value="1"/>
</dbReference>
<dbReference type="PANTHER" id="PTHR43181">
    <property type="entry name" value="2-C-METHYL-D-ERYTHRITOL 2,4-CYCLODIPHOSPHATE SYNTHASE, CHLOROPLASTIC"/>
    <property type="match status" value="1"/>
</dbReference>
<dbReference type="PANTHER" id="PTHR43181:SF1">
    <property type="entry name" value="2-C-METHYL-D-ERYTHRITOL 2,4-CYCLODIPHOSPHATE SYNTHASE, CHLOROPLASTIC"/>
    <property type="match status" value="1"/>
</dbReference>
<dbReference type="Pfam" id="PF02542">
    <property type="entry name" value="YgbB"/>
    <property type="match status" value="1"/>
</dbReference>
<dbReference type="SUPFAM" id="SSF69765">
    <property type="entry name" value="IpsF-like"/>
    <property type="match status" value="1"/>
</dbReference>
<dbReference type="PROSITE" id="PS01350">
    <property type="entry name" value="ISPF"/>
    <property type="match status" value="1"/>
</dbReference>
<protein>
    <recommendedName>
        <fullName evidence="1">2-C-methyl-D-erythritol 2,4-cyclodiphosphate synthase</fullName>
        <shortName evidence="1">MECDP-synthase</shortName>
        <shortName evidence="1">MECPP-synthase</shortName>
        <shortName evidence="1">MECPS</shortName>
        <ecNumber evidence="1">4.6.1.12</ecNumber>
    </recommendedName>
</protein>
<feature type="chain" id="PRO_1000202876" description="2-C-methyl-D-erythritol 2,4-cyclodiphosphate synthase">
    <location>
        <begin position="1"/>
        <end position="157"/>
    </location>
</feature>
<feature type="binding site" evidence="1">
    <location>
        <begin position="8"/>
        <end position="10"/>
    </location>
    <ligand>
        <name>4-CDP-2-C-methyl-D-erythritol 2-phosphate</name>
        <dbReference type="ChEBI" id="CHEBI:57919"/>
    </ligand>
</feature>
<feature type="binding site" evidence="1">
    <location>
        <position position="8"/>
    </location>
    <ligand>
        <name>a divalent metal cation</name>
        <dbReference type="ChEBI" id="CHEBI:60240"/>
    </ligand>
</feature>
<feature type="binding site" evidence="1">
    <location>
        <position position="10"/>
    </location>
    <ligand>
        <name>a divalent metal cation</name>
        <dbReference type="ChEBI" id="CHEBI:60240"/>
    </ligand>
</feature>
<feature type="binding site" evidence="1">
    <location>
        <begin position="34"/>
        <end position="35"/>
    </location>
    <ligand>
        <name>4-CDP-2-C-methyl-D-erythritol 2-phosphate</name>
        <dbReference type="ChEBI" id="CHEBI:57919"/>
    </ligand>
</feature>
<feature type="binding site" evidence="1">
    <location>
        <position position="42"/>
    </location>
    <ligand>
        <name>a divalent metal cation</name>
        <dbReference type="ChEBI" id="CHEBI:60240"/>
    </ligand>
</feature>
<feature type="binding site" evidence="1">
    <location>
        <begin position="56"/>
        <end position="58"/>
    </location>
    <ligand>
        <name>4-CDP-2-C-methyl-D-erythritol 2-phosphate</name>
        <dbReference type="ChEBI" id="CHEBI:57919"/>
    </ligand>
</feature>
<feature type="binding site" evidence="1">
    <location>
        <begin position="61"/>
        <end position="65"/>
    </location>
    <ligand>
        <name>4-CDP-2-C-methyl-D-erythritol 2-phosphate</name>
        <dbReference type="ChEBI" id="CHEBI:57919"/>
    </ligand>
</feature>
<feature type="binding site" evidence="1">
    <location>
        <begin position="100"/>
        <end position="106"/>
    </location>
    <ligand>
        <name>4-CDP-2-C-methyl-D-erythritol 2-phosphate</name>
        <dbReference type="ChEBI" id="CHEBI:57919"/>
    </ligand>
</feature>
<feature type="binding site" evidence="1">
    <location>
        <begin position="132"/>
        <end position="135"/>
    </location>
    <ligand>
        <name>4-CDP-2-C-methyl-D-erythritol 2-phosphate</name>
        <dbReference type="ChEBI" id="CHEBI:57919"/>
    </ligand>
</feature>
<feature type="binding site" evidence="1">
    <location>
        <position position="139"/>
    </location>
    <ligand>
        <name>4-CDP-2-C-methyl-D-erythritol 2-phosphate</name>
        <dbReference type="ChEBI" id="CHEBI:57919"/>
    </ligand>
</feature>
<feature type="binding site" evidence="1">
    <location>
        <position position="142"/>
    </location>
    <ligand>
        <name>4-CDP-2-C-methyl-D-erythritol 2-phosphate</name>
        <dbReference type="ChEBI" id="CHEBI:57919"/>
    </ligand>
</feature>
<feature type="site" description="Transition state stabilizer" evidence="1">
    <location>
        <position position="34"/>
    </location>
</feature>
<feature type="site" description="Transition state stabilizer" evidence="1">
    <location>
        <position position="133"/>
    </location>
</feature>
<comment type="function">
    <text evidence="1">Involved in the biosynthesis of isopentenyl diphosphate (IPP) and dimethylallyl diphosphate (DMAPP), two major building blocks of isoprenoid compounds. Catalyzes the conversion of 4-diphosphocytidyl-2-C-methyl-D-erythritol 2-phosphate (CDP-ME2P) to 2-C-methyl-D-erythritol 2,4-cyclodiphosphate (ME-CPP) with a corresponding release of cytidine 5-monophosphate (CMP).</text>
</comment>
<comment type="catalytic activity">
    <reaction evidence="1">
        <text>4-CDP-2-C-methyl-D-erythritol 2-phosphate = 2-C-methyl-D-erythritol 2,4-cyclic diphosphate + CMP</text>
        <dbReference type="Rhea" id="RHEA:23864"/>
        <dbReference type="ChEBI" id="CHEBI:57919"/>
        <dbReference type="ChEBI" id="CHEBI:58483"/>
        <dbReference type="ChEBI" id="CHEBI:60377"/>
        <dbReference type="EC" id="4.6.1.12"/>
    </reaction>
</comment>
<comment type="cofactor">
    <cofactor evidence="1">
        <name>a divalent metal cation</name>
        <dbReference type="ChEBI" id="CHEBI:60240"/>
    </cofactor>
    <text evidence="1">Binds 1 divalent metal cation per subunit.</text>
</comment>
<comment type="pathway">
    <text evidence="1">Isoprenoid biosynthesis; isopentenyl diphosphate biosynthesis via DXP pathway; isopentenyl diphosphate from 1-deoxy-D-xylulose 5-phosphate: step 4/6.</text>
</comment>
<comment type="subunit">
    <text evidence="1">Homotrimer.</text>
</comment>
<comment type="similarity">
    <text evidence="1">Belongs to the IspF family.</text>
</comment>
<evidence type="ECO:0000255" key="1">
    <source>
        <dbReference type="HAMAP-Rule" id="MF_00107"/>
    </source>
</evidence>
<accession>C5BGJ0</accession>
<proteinExistence type="inferred from homology"/>
<gene>
    <name evidence="1" type="primary">ispF</name>
    <name type="ordered locus">NT01EI_3255</name>
</gene>
<sequence length="157" mass="16603">MRIGHGFDVHRFGGEGPLIIGGVRIAHPQGLLAHSDGDVALHAATDALLGAAALGDIGKLFPDTDPAYKGADSRALLREAYRSIRARGYRLGNLDITLIAQAPKMAPHIPQMRVFLAEDLQCPIDDVNVKATTTEKLGFTGRGEGIACAAVALLIKE</sequence>